<evidence type="ECO:0000250" key="1"/>
<evidence type="ECO:0000255" key="2"/>
<evidence type="ECO:0000305" key="3"/>
<organism>
    <name type="scientific">Rickettsia prowazekii (strain Madrid E)</name>
    <dbReference type="NCBI Taxonomy" id="272947"/>
    <lineage>
        <taxon>Bacteria</taxon>
        <taxon>Pseudomonadati</taxon>
        <taxon>Pseudomonadota</taxon>
        <taxon>Alphaproteobacteria</taxon>
        <taxon>Rickettsiales</taxon>
        <taxon>Rickettsiaceae</taxon>
        <taxon>Rickettsieae</taxon>
        <taxon>Rickettsia</taxon>
        <taxon>typhus group</taxon>
    </lineage>
</organism>
<sequence>MYKKLYLIGILLLGLISGLTFNLIFFTVPYQLSEAKYTTDIIGAISLAAFPYCLKVIWSPFIDKYSIPFLGVKLGHRRSWALVSQIFLILAMMWFLKRSPCNNLCITAIILFIIAFFSSTQDIVLDAYRIERTTSKEELSIVFTFSSIGFRLGMLLGSVGSLYSSIIFGWNTVYKFALFITMVGPIVILCIKEPKLKTKRHTTNTLIDLQQYFEVIKKSIISFKNEQQYLLLIILFVFLYKAADSIPMAMSIPLFLDLSFTTHEIAVIYKAYGLLIMIVGGTLGGILAAKIGIFHSVLIGGVIQLLSPLMFMILATIGYDIKTFIITITIQNFCSGFAGTIISIYFASLCNSEFVATQYAISASFSSLSRIILASLGGICAKHLTWSVFFLCNTLFSMLFIPIFYTIYRKKLHFMNHSKKI</sequence>
<gene>
    <name type="primary">ampG3</name>
    <name type="ordered locus">RP781</name>
</gene>
<reference key="1">
    <citation type="journal article" date="1998" name="Nature">
        <title>The genome sequence of Rickettsia prowazekii and the origin of mitochondria.</title>
        <authorList>
            <person name="Andersson S.G.E."/>
            <person name="Zomorodipour A."/>
            <person name="Andersson J.O."/>
            <person name="Sicheritz-Ponten T."/>
            <person name="Alsmark U.C.M."/>
            <person name="Podowski R.M."/>
            <person name="Naeslund A.K."/>
            <person name="Eriksson A.-S."/>
            <person name="Winkler H.H."/>
            <person name="Kurland C.G."/>
        </authorList>
    </citation>
    <scope>NUCLEOTIDE SEQUENCE [LARGE SCALE GENOMIC DNA]</scope>
    <source>
        <strain>Madrid E</strain>
    </source>
</reference>
<proteinExistence type="inferred from homology"/>
<accession>Q9ZCG7</accession>
<dbReference type="EMBL" id="AJ235273">
    <property type="protein sequence ID" value="CAA15207.1"/>
    <property type="molecule type" value="Genomic_DNA"/>
</dbReference>
<dbReference type="PIR" id="G71638">
    <property type="entry name" value="G71638"/>
</dbReference>
<dbReference type="RefSeq" id="NP_221131.1">
    <property type="nucleotide sequence ID" value="NC_000963.1"/>
</dbReference>
<dbReference type="RefSeq" id="WP_004596944.1">
    <property type="nucleotide sequence ID" value="NC_000963.1"/>
</dbReference>
<dbReference type="SMR" id="Q9ZCG7"/>
<dbReference type="STRING" id="272947.gene:17555850"/>
<dbReference type="EnsemblBacteria" id="CAA15207">
    <property type="protein sequence ID" value="CAA15207"/>
    <property type="gene ID" value="CAA15207"/>
</dbReference>
<dbReference type="KEGG" id="rpr:RP781"/>
<dbReference type="PATRIC" id="fig|272947.5.peg.817"/>
<dbReference type="eggNOG" id="COG2814">
    <property type="taxonomic scope" value="Bacteria"/>
</dbReference>
<dbReference type="HOGENOM" id="CLU_029352_1_2_5"/>
<dbReference type="OrthoDB" id="9787815at2"/>
<dbReference type="Proteomes" id="UP000002480">
    <property type="component" value="Chromosome"/>
</dbReference>
<dbReference type="GO" id="GO:0005886">
    <property type="term" value="C:plasma membrane"/>
    <property type="evidence" value="ECO:0007669"/>
    <property type="project" value="UniProtKB-SubCell"/>
</dbReference>
<dbReference type="GO" id="GO:0022857">
    <property type="term" value="F:transmembrane transporter activity"/>
    <property type="evidence" value="ECO:0007669"/>
    <property type="project" value="InterPro"/>
</dbReference>
<dbReference type="Gene3D" id="1.20.1250.20">
    <property type="entry name" value="MFS general substrate transporter like domains"/>
    <property type="match status" value="2"/>
</dbReference>
<dbReference type="InterPro" id="IPR004752">
    <property type="entry name" value="AmpG_permease/AT-1"/>
</dbReference>
<dbReference type="InterPro" id="IPR011701">
    <property type="entry name" value="MFS"/>
</dbReference>
<dbReference type="InterPro" id="IPR020846">
    <property type="entry name" value="MFS_dom"/>
</dbReference>
<dbReference type="InterPro" id="IPR036259">
    <property type="entry name" value="MFS_trans_sf"/>
</dbReference>
<dbReference type="PANTHER" id="PTHR12778:SF10">
    <property type="entry name" value="MAJOR FACILITATOR SUPERFAMILY DOMAIN-CONTAINING PROTEIN 3"/>
    <property type="match status" value="1"/>
</dbReference>
<dbReference type="PANTHER" id="PTHR12778">
    <property type="entry name" value="SOLUTE CARRIER FAMILY 33 ACETYL-COA TRANSPORTER -RELATED"/>
    <property type="match status" value="1"/>
</dbReference>
<dbReference type="Pfam" id="PF07690">
    <property type="entry name" value="MFS_1"/>
    <property type="match status" value="1"/>
</dbReference>
<dbReference type="SUPFAM" id="SSF103473">
    <property type="entry name" value="MFS general substrate transporter"/>
    <property type="match status" value="1"/>
</dbReference>
<dbReference type="PROSITE" id="PS50850">
    <property type="entry name" value="MFS"/>
    <property type="match status" value="1"/>
</dbReference>
<keyword id="KW-0997">Cell inner membrane</keyword>
<keyword id="KW-1003">Cell membrane</keyword>
<keyword id="KW-0472">Membrane</keyword>
<keyword id="KW-1185">Reference proteome</keyword>
<keyword id="KW-0812">Transmembrane</keyword>
<keyword id="KW-1133">Transmembrane helix</keyword>
<keyword id="KW-0813">Transport</keyword>
<feature type="chain" id="PRO_0000281101" description="Putative transporter AmpG 3">
    <location>
        <begin position="1"/>
        <end position="421"/>
    </location>
</feature>
<feature type="transmembrane region" description="Helical" evidence="2">
    <location>
        <begin position="6"/>
        <end position="26"/>
    </location>
</feature>
<feature type="transmembrane region" description="Helical" evidence="2">
    <location>
        <begin position="41"/>
        <end position="61"/>
    </location>
</feature>
<feature type="transmembrane region" description="Helical" evidence="2">
    <location>
        <begin position="80"/>
        <end position="100"/>
    </location>
</feature>
<feature type="transmembrane region" description="Helical" evidence="2">
    <location>
        <begin position="104"/>
        <end position="124"/>
    </location>
</feature>
<feature type="transmembrane region" description="Helical" evidence="2">
    <location>
        <begin position="139"/>
        <end position="159"/>
    </location>
</feature>
<feature type="transmembrane region" description="Helical" evidence="2">
    <location>
        <begin position="166"/>
        <end position="186"/>
    </location>
</feature>
<feature type="transmembrane region" description="Helical" evidence="2">
    <location>
        <begin position="230"/>
        <end position="250"/>
    </location>
</feature>
<feature type="transmembrane region" description="Helical" evidence="2">
    <location>
        <begin position="274"/>
        <end position="294"/>
    </location>
</feature>
<feature type="transmembrane region" description="Helical" evidence="2">
    <location>
        <begin position="297"/>
        <end position="317"/>
    </location>
</feature>
<feature type="transmembrane region" description="Helical" evidence="2">
    <location>
        <begin position="324"/>
        <end position="344"/>
    </location>
</feature>
<feature type="transmembrane region" description="Helical" evidence="2">
    <location>
        <begin position="360"/>
        <end position="380"/>
    </location>
</feature>
<feature type="transmembrane region" description="Helical" evidence="2">
    <location>
        <begin position="388"/>
        <end position="408"/>
    </location>
</feature>
<protein>
    <recommendedName>
        <fullName>Putative transporter AmpG 3</fullName>
    </recommendedName>
</protein>
<comment type="subcellular location">
    <subcellularLocation>
        <location evidence="1">Cell inner membrane</location>
        <topology evidence="1">Multi-pass membrane protein</topology>
    </subcellularLocation>
</comment>
<comment type="similarity">
    <text evidence="3">Belongs to the major facilitator superfamily.</text>
</comment>
<name>AMPG3_RICPR</name>